<feature type="signal peptide" evidence="2">
    <location>
        <begin position="1"/>
        <end position="18"/>
    </location>
</feature>
<feature type="propeptide" id="PRO_0000401045" evidence="1">
    <location>
        <begin position="19"/>
        <end position="46"/>
    </location>
</feature>
<feature type="peptide" id="PRO_0000401046" description="Hainantoxin-XVIII-5">
    <location>
        <begin position="47"/>
        <end position="109"/>
    </location>
</feature>
<feature type="disulfide bond" evidence="1">
    <location>
        <begin position="47"/>
        <end position="62"/>
    </location>
</feature>
<feature type="disulfide bond" evidence="1">
    <location>
        <begin position="55"/>
        <end position="68"/>
    </location>
</feature>
<feature type="disulfide bond" evidence="1">
    <location>
        <begin position="59"/>
        <end position="108"/>
    </location>
</feature>
<feature type="disulfide bond" evidence="1">
    <location>
        <begin position="61"/>
        <end position="81"/>
    </location>
</feature>
<keyword id="KW-1015">Disulfide bond</keyword>
<keyword id="KW-0872">Ion channel impairing toxin</keyword>
<keyword id="KW-0960">Knottin</keyword>
<keyword id="KW-0964">Secreted</keyword>
<keyword id="KW-0732">Signal</keyword>
<keyword id="KW-0800">Toxin</keyword>
<comment type="function">
    <text>Putative ion channel inhibitor.</text>
</comment>
<comment type="subcellular location">
    <subcellularLocation>
        <location evidence="1">Secreted</location>
    </subcellularLocation>
</comment>
<comment type="tissue specificity">
    <text>Expressed by the venom gland.</text>
</comment>
<comment type="domain">
    <text evidence="1">The presence of a 'disulfide through disulfide knot' structurally defines this protein as a knottin.</text>
</comment>
<comment type="similarity">
    <text>Belongs to the neurotoxin 25 family. F7 subfamily.</text>
</comment>
<accession>D2Y2N9</accession>
<name>H18E1_CYRHA</name>
<protein>
    <recommendedName>
        <fullName>Hainantoxin-XVIII-5</fullName>
        <shortName>HNTX-XVIII-5</shortName>
    </recommendedName>
</protein>
<reference key="1">
    <citation type="journal article" date="2010" name="J. Proteome Res.">
        <title>Molecular diversification of peptide toxins from the tarantula Haplopelma hainanum (Ornithoctonus hainana) venom based on transcriptomic, peptidomic, and genomic analyses.</title>
        <authorList>
            <person name="Tang X."/>
            <person name="Zhang Y."/>
            <person name="Hu W."/>
            <person name="Xu D."/>
            <person name="Tao H."/>
            <person name="Yang X."/>
            <person name="Li Y."/>
            <person name="Jiang L."/>
            <person name="Liang S."/>
        </authorList>
    </citation>
    <scope>NUCLEOTIDE SEQUENCE [LARGE SCALE GENOMIC DNA]</scope>
    <source>
        <tissue>Venom gland</tissue>
    </source>
</reference>
<proteinExistence type="inferred from homology"/>
<evidence type="ECO:0000250" key="1"/>
<evidence type="ECO:0000255" key="2"/>
<organism>
    <name type="scientific">Cyriopagopus hainanus</name>
    <name type="common">Chinese bird spider</name>
    <name type="synonym">Haplopelma hainanum</name>
    <dbReference type="NCBI Taxonomy" id="209901"/>
    <lineage>
        <taxon>Eukaryota</taxon>
        <taxon>Metazoa</taxon>
        <taxon>Ecdysozoa</taxon>
        <taxon>Arthropoda</taxon>
        <taxon>Chelicerata</taxon>
        <taxon>Arachnida</taxon>
        <taxon>Araneae</taxon>
        <taxon>Mygalomorphae</taxon>
        <taxon>Theraphosidae</taxon>
        <taxon>Haplopelma</taxon>
    </lineage>
</organism>
<dbReference type="EMBL" id="GU293116">
    <property type="protein sequence ID" value="ADB56932.1"/>
    <property type="molecule type" value="Genomic_DNA"/>
</dbReference>
<dbReference type="ArachnoServer" id="AS001525">
    <property type="toxin name" value="U14-theraphotoxin-Hhn1e"/>
</dbReference>
<dbReference type="GO" id="GO:0005576">
    <property type="term" value="C:extracellular region"/>
    <property type="evidence" value="ECO:0007669"/>
    <property type="project" value="UniProtKB-SubCell"/>
</dbReference>
<dbReference type="GO" id="GO:0099106">
    <property type="term" value="F:ion channel regulator activity"/>
    <property type="evidence" value="ECO:0007669"/>
    <property type="project" value="UniProtKB-KW"/>
</dbReference>
<dbReference type="GO" id="GO:0090729">
    <property type="term" value="F:toxin activity"/>
    <property type="evidence" value="ECO:0007669"/>
    <property type="project" value="UniProtKB-KW"/>
</dbReference>
<sequence>MKLSIIIIATSLVIAVVAFPSKDSKAIENDKTEQRMEIVVQETARACSKQIGNKCKRNCECCGKTVVCGTIYVGGKEVNQCMDKTSDNAILNGLGKGMNFIENTFSFCV</sequence>